<protein>
    <recommendedName>
        <fullName evidence="1">Large ribosomal subunit protein bL12</fullName>
    </recommendedName>
    <alternativeName>
        <fullName evidence="2">50S ribosomal protein L7/L12</fullName>
    </alternativeName>
</protein>
<organism>
    <name type="scientific">Neisseria gonorrhoeae (strain NCCP11945)</name>
    <dbReference type="NCBI Taxonomy" id="521006"/>
    <lineage>
        <taxon>Bacteria</taxon>
        <taxon>Pseudomonadati</taxon>
        <taxon>Pseudomonadota</taxon>
        <taxon>Betaproteobacteria</taxon>
        <taxon>Neisseriales</taxon>
        <taxon>Neisseriaceae</taxon>
        <taxon>Neisseria</taxon>
    </lineage>
</organism>
<evidence type="ECO:0000255" key="1">
    <source>
        <dbReference type="HAMAP-Rule" id="MF_00368"/>
    </source>
</evidence>
<evidence type="ECO:0000305" key="2"/>
<feature type="chain" id="PRO_1000121463" description="Large ribosomal subunit protein bL12">
    <location>
        <begin position="1"/>
        <end position="123"/>
    </location>
</feature>
<gene>
    <name evidence="1" type="primary">rplL</name>
    <name type="ordered locus">NGK_2419</name>
</gene>
<accession>B4RQW1</accession>
<reference key="1">
    <citation type="journal article" date="2008" name="J. Bacteriol.">
        <title>Complete genome sequence of Neisseria gonorrhoeae NCCP11945.</title>
        <authorList>
            <person name="Chung G.T."/>
            <person name="Yoo J.S."/>
            <person name="Oh H.B."/>
            <person name="Lee Y.S."/>
            <person name="Cha S.H."/>
            <person name="Kim S.J."/>
            <person name="Yoo C.K."/>
        </authorList>
    </citation>
    <scope>NUCLEOTIDE SEQUENCE [LARGE SCALE GENOMIC DNA]</scope>
    <source>
        <strain>NCCP11945</strain>
    </source>
</reference>
<proteinExistence type="inferred from homology"/>
<keyword id="KW-0687">Ribonucleoprotein</keyword>
<keyword id="KW-0689">Ribosomal protein</keyword>
<dbReference type="EMBL" id="CP001050">
    <property type="protein sequence ID" value="ACF31021.1"/>
    <property type="molecule type" value="Genomic_DNA"/>
</dbReference>
<dbReference type="RefSeq" id="WP_003690106.1">
    <property type="nucleotide sequence ID" value="NC_011035.1"/>
</dbReference>
<dbReference type="SMR" id="B4RQW1"/>
<dbReference type="GeneID" id="66754279"/>
<dbReference type="KEGG" id="ngk:NGK_2419"/>
<dbReference type="HOGENOM" id="CLU_086499_3_2_4"/>
<dbReference type="Proteomes" id="UP000002564">
    <property type="component" value="Chromosome"/>
</dbReference>
<dbReference type="GO" id="GO:0022625">
    <property type="term" value="C:cytosolic large ribosomal subunit"/>
    <property type="evidence" value="ECO:0007669"/>
    <property type="project" value="TreeGrafter"/>
</dbReference>
<dbReference type="GO" id="GO:0003729">
    <property type="term" value="F:mRNA binding"/>
    <property type="evidence" value="ECO:0007669"/>
    <property type="project" value="TreeGrafter"/>
</dbReference>
<dbReference type="GO" id="GO:0003735">
    <property type="term" value="F:structural constituent of ribosome"/>
    <property type="evidence" value="ECO:0007669"/>
    <property type="project" value="InterPro"/>
</dbReference>
<dbReference type="GO" id="GO:0006412">
    <property type="term" value="P:translation"/>
    <property type="evidence" value="ECO:0007669"/>
    <property type="project" value="UniProtKB-UniRule"/>
</dbReference>
<dbReference type="CDD" id="cd00387">
    <property type="entry name" value="Ribosomal_L7_L12"/>
    <property type="match status" value="1"/>
</dbReference>
<dbReference type="FunFam" id="1.20.5.710:FF:000003">
    <property type="entry name" value="50S ribosomal protein L7/L12"/>
    <property type="match status" value="1"/>
</dbReference>
<dbReference type="FunFam" id="3.30.1390.10:FF:000001">
    <property type="entry name" value="50S ribosomal protein L7/L12"/>
    <property type="match status" value="1"/>
</dbReference>
<dbReference type="Gene3D" id="3.30.1390.10">
    <property type="match status" value="1"/>
</dbReference>
<dbReference type="Gene3D" id="1.20.5.710">
    <property type="entry name" value="Single helix bin"/>
    <property type="match status" value="1"/>
</dbReference>
<dbReference type="HAMAP" id="MF_00368">
    <property type="entry name" value="Ribosomal_bL12"/>
    <property type="match status" value="1"/>
</dbReference>
<dbReference type="InterPro" id="IPR000206">
    <property type="entry name" value="Ribosomal_bL12"/>
</dbReference>
<dbReference type="InterPro" id="IPR013823">
    <property type="entry name" value="Ribosomal_bL12_C"/>
</dbReference>
<dbReference type="InterPro" id="IPR014719">
    <property type="entry name" value="Ribosomal_bL12_C/ClpS-like"/>
</dbReference>
<dbReference type="InterPro" id="IPR008932">
    <property type="entry name" value="Ribosomal_bL12_oligo"/>
</dbReference>
<dbReference type="InterPro" id="IPR036235">
    <property type="entry name" value="Ribosomal_bL12_oligo_N_sf"/>
</dbReference>
<dbReference type="NCBIfam" id="TIGR00855">
    <property type="entry name" value="L12"/>
    <property type="match status" value="1"/>
</dbReference>
<dbReference type="PANTHER" id="PTHR45987">
    <property type="entry name" value="39S RIBOSOMAL PROTEIN L12"/>
    <property type="match status" value="1"/>
</dbReference>
<dbReference type="PANTHER" id="PTHR45987:SF4">
    <property type="entry name" value="LARGE RIBOSOMAL SUBUNIT PROTEIN BL12M"/>
    <property type="match status" value="1"/>
</dbReference>
<dbReference type="Pfam" id="PF00542">
    <property type="entry name" value="Ribosomal_L12"/>
    <property type="match status" value="1"/>
</dbReference>
<dbReference type="Pfam" id="PF16320">
    <property type="entry name" value="Ribosomal_L12_N"/>
    <property type="match status" value="1"/>
</dbReference>
<dbReference type="SUPFAM" id="SSF54736">
    <property type="entry name" value="ClpS-like"/>
    <property type="match status" value="1"/>
</dbReference>
<dbReference type="SUPFAM" id="SSF48300">
    <property type="entry name" value="Ribosomal protein L7/12, oligomerisation (N-terminal) domain"/>
    <property type="match status" value="1"/>
</dbReference>
<comment type="function">
    <text evidence="1">Forms part of the ribosomal stalk which helps the ribosome interact with GTP-bound translation factors. Is thus essential for accurate translation.</text>
</comment>
<comment type="subunit">
    <text evidence="1">Homodimer. Part of the ribosomal stalk of the 50S ribosomal subunit. Forms a multimeric L10(L12)X complex, where L10 forms an elongated spine to which 2 to 4 L12 dimers bind in a sequential fashion. Binds GTP-bound translation factors.</text>
</comment>
<comment type="similarity">
    <text evidence="1">Belongs to the bacterial ribosomal protein bL12 family.</text>
</comment>
<sequence>MAITKEDILEAVGSLTVMELNDLVKAFEEKFGVSAAAVAVAGPAGAGAADAEEKTEFDVVLASAGDQKVGVIKVVRAITGLGLKEAKDIVDGAPKTIKEGVSKAEAEDIQKQLEAAGAKVEIK</sequence>
<name>RL7_NEIG2</name>